<reference key="1">
    <citation type="journal article" date="2006" name="J. Bacteriol.">
        <title>The genome sequence of the obligately chemolithoautotrophic, facultatively anaerobic bacterium Thiobacillus denitrificans.</title>
        <authorList>
            <person name="Beller H.R."/>
            <person name="Chain P.S."/>
            <person name="Letain T.E."/>
            <person name="Chakicherla A."/>
            <person name="Larimer F.W."/>
            <person name="Richardson P.M."/>
            <person name="Coleman M.A."/>
            <person name="Wood A.P."/>
            <person name="Kelly D.P."/>
        </authorList>
    </citation>
    <scope>NUCLEOTIDE SEQUENCE [LARGE SCALE GENOMIC DNA]</scope>
    <source>
        <strain>ATCC 25259 / T1</strain>
    </source>
</reference>
<proteinExistence type="inferred from homology"/>
<name>RIMO_THIDA</name>
<dbReference type="EC" id="2.8.4.4" evidence="1"/>
<dbReference type="EMBL" id="CP000116">
    <property type="protein sequence ID" value="AAZ97717.1"/>
    <property type="molecule type" value="Genomic_DNA"/>
</dbReference>
<dbReference type="RefSeq" id="WP_011312276.1">
    <property type="nucleotide sequence ID" value="NC_007404.1"/>
</dbReference>
<dbReference type="SMR" id="Q3SI16"/>
<dbReference type="STRING" id="292415.Tbd_1764"/>
<dbReference type="KEGG" id="tbd:Tbd_1764"/>
<dbReference type="eggNOG" id="COG0621">
    <property type="taxonomic scope" value="Bacteria"/>
</dbReference>
<dbReference type="HOGENOM" id="CLU_018697_0_0_4"/>
<dbReference type="OrthoDB" id="9805215at2"/>
<dbReference type="Proteomes" id="UP000008291">
    <property type="component" value="Chromosome"/>
</dbReference>
<dbReference type="GO" id="GO:0005829">
    <property type="term" value="C:cytosol"/>
    <property type="evidence" value="ECO:0007669"/>
    <property type="project" value="TreeGrafter"/>
</dbReference>
<dbReference type="GO" id="GO:0051539">
    <property type="term" value="F:4 iron, 4 sulfur cluster binding"/>
    <property type="evidence" value="ECO:0007669"/>
    <property type="project" value="UniProtKB-UniRule"/>
</dbReference>
<dbReference type="GO" id="GO:0035599">
    <property type="term" value="F:aspartic acid methylthiotransferase activity"/>
    <property type="evidence" value="ECO:0007669"/>
    <property type="project" value="TreeGrafter"/>
</dbReference>
<dbReference type="GO" id="GO:0046872">
    <property type="term" value="F:metal ion binding"/>
    <property type="evidence" value="ECO:0007669"/>
    <property type="project" value="UniProtKB-KW"/>
</dbReference>
<dbReference type="GO" id="GO:0103039">
    <property type="term" value="F:protein methylthiotransferase activity"/>
    <property type="evidence" value="ECO:0007669"/>
    <property type="project" value="UniProtKB-EC"/>
</dbReference>
<dbReference type="GO" id="GO:0006400">
    <property type="term" value="P:tRNA modification"/>
    <property type="evidence" value="ECO:0007669"/>
    <property type="project" value="InterPro"/>
</dbReference>
<dbReference type="CDD" id="cd01335">
    <property type="entry name" value="Radical_SAM"/>
    <property type="match status" value="1"/>
</dbReference>
<dbReference type="FunFam" id="3.40.50.12160:FF:000002">
    <property type="entry name" value="Ribosomal protein S12 methylthiotransferase RimO"/>
    <property type="match status" value="1"/>
</dbReference>
<dbReference type="FunFam" id="3.80.30.20:FF:000001">
    <property type="entry name" value="tRNA-2-methylthio-N(6)-dimethylallyladenosine synthase 2"/>
    <property type="match status" value="1"/>
</dbReference>
<dbReference type="Gene3D" id="3.40.50.12160">
    <property type="entry name" value="Methylthiotransferase, N-terminal domain"/>
    <property type="match status" value="1"/>
</dbReference>
<dbReference type="Gene3D" id="2.40.50.140">
    <property type="entry name" value="Nucleic acid-binding proteins"/>
    <property type="match status" value="1"/>
</dbReference>
<dbReference type="Gene3D" id="3.80.30.20">
    <property type="entry name" value="tm_1862 like domain"/>
    <property type="match status" value="1"/>
</dbReference>
<dbReference type="HAMAP" id="MF_01865">
    <property type="entry name" value="MTTase_RimO"/>
    <property type="match status" value="1"/>
</dbReference>
<dbReference type="InterPro" id="IPR006638">
    <property type="entry name" value="Elp3/MiaA/NifB-like_rSAM"/>
</dbReference>
<dbReference type="InterPro" id="IPR005839">
    <property type="entry name" value="Methylthiotransferase"/>
</dbReference>
<dbReference type="InterPro" id="IPR020612">
    <property type="entry name" value="Methylthiotransferase_CS"/>
</dbReference>
<dbReference type="InterPro" id="IPR013848">
    <property type="entry name" value="Methylthiotransferase_N"/>
</dbReference>
<dbReference type="InterPro" id="IPR038135">
    <property type="entry name" value="Methylthiotransferase_N_sf"/>
</dbReference>
<dbReference type="InterPro" id="IPR012340">
    <property type="entry name" value="NA-bd_OB-fold"/>
</dbReference>
<dbReference type="InterPro" id="IPR005840">
    <property type="entry name" value="Ribosomal_uS12_MeSTrfase_RimO"/>
</dbReference>
<dbReference type="InterPro" id="IPR007197">
    <property type="entry name" value="rSAM"/>
</dbReference>
<dbReference type="InterPro" id="IPR023404">
    <property type="entry name" value="rSAM_horseshoe"/>
</dbReference>
<dbReference type="InterPro" id="IPR002792">
    <property type="entry name" value="TRAM_dom"/>
</dbReference>
<dbReference type="NCBIfam" id="TIGR01125">
    <property type="entry name" value="30S ribosomal protein S12 methylthiotransferase RimO"/>
    <property type="match status" value="1"/>
</dbReference>
<dbReference type="NCBIfam" id="TIGR00089">
    <property type="entry name" value="MiaB/RimO family radical SAM methylthiotransferase"/>
    <property type="match status" value="1"/>
</dbReference>
<dbReference type="PANTHER" id="PTHR43837">
    <property type="entry name" value="RIBOSOMAL PROTEIN S12 METHYLTHIOTRANSFERASE RIMO"/>
    <property type="match status" value="1"/>
</dbReference>
<dbReference type="PANTHER" id="PTHR43837:SF1">
    <property type="entry name" value="RIBOSOMAL PROTEIN US12 METHYLTHIOTRANSFERASE RIMO"/>
    <property type="match status" value="1"/>
</dbReference>
<dbReference type="Pfam" id="PF04055">
    <property type="entry name" value="Radical_SAM"/>
    <property type="match status" value="1"/>
</dbReference>
<dbReference type="Pfam" id="PF18693">
    <property type="entry name" value="TRAM_2"/>
    <property type="match status" value="1"/>
</dbReference>
<dbReference type="Pfam" id="PF00919">
    <property type="entry name" value="UPF0004"/>
    <property type="match status" value="1"/>
</dbReference>
<dbReference type="SFLD" id="SFLDG01082">
    <property type="entry name" value="B12-binding_domain_containing"/>
    <property type="match status" value="1"/>
</dbReference>
<dbReference type="SFLD" id="SFLDS00029">
    <property type="entry name" value="Radical_SAM"/>
    <property type="match status" value="1"/>
</dbReference>
<dbReference type="SFLD" id="SFLDF00274">
    <property type="entry name" value="ribosomal_protein_S12_methylth"/>
    <property type="match status" value="1"/>
</dbReference>
<dbReference type="SMART" id="SM00729">
    <property type="entry name" value="Elp3"/>
    <property type="match status" value="1"/>
</dbReference>
<dbReference type="SUPFAM" id="SSF102114">
    <property type="entry name" value="Radical SAM enzymes"/>
    <property type="match status" value="1"/>
</dbReference>
<dbReference type="PROSITE" id="PS51449">
    <property type="entry name" value="MTTASE_N"/>
    <property type="match status" value="1"/>
</dbReference>
<dbReference type="PROSITE" id="PS01278">
    <property type="entry name" value="MTTASE_RADICAL"/>
    <property type="match status" value="1"/>
</dbReference>
<dbReference type="PROSITE" id="PS51918">
    <property type="entry name" value="RADICAL_SAM"/>
    <property type="match status" value="1"/>
</dbReference>
<dbReference type="PROSITE" id="PS50926">
    <property type="entry name" value="TRAM"/>
    <property type="match status" value="1"/>
</dbReference>
<evidence type="ECO:0000255" key="1">
    <source>
        <dbReference type="HAMAP-Rule" id="MF_01865"/>
    </source>
</evidence>
<evidence type="ECO:0000255" key="2">
    <source>
        <dbReference type="PROSITE-ProRule" id="PRU01266"/>
    </source>
</evidence>
<organism>
    <name type="scientific">Thiobacillus denitrificans (strain ATCC 25259 / T1)</name>
    <dbReference type="NCBI Taxonomy" id="292415"/>
    <lineage>
        <taxon>Bacteria</taxon>
        <taxon>Pseudomonadati</taxon>
        <taxon>Pseudomonadota</taxon>
        <taxon>Betaproteobacteria</taxon>
        <taxon>Nitrosomonadales</taxon>
        <taxon>Thiobacillaceae</taxon>
        <taxon>Thiobacillus</taxon>
    </lineage>
</organism>
<comment type="function">
    <text evidence="1">Catalyzes the methylthiolation of an aspartic acid residue of ribosomal protein uS12.</text>
</comment>
<comment type="catalytic activity">
    <reaction evidence="1">
        <text>L-aspartate(89)-[ribosomal protein uS12]-hydrogen + (sulfur carrier)-SH + AH2 + 2 S-adenosyl-L-methionine = 3-methylsulfanyl-L-aspartate(89)-[ribosomal protein uS12]-hydrogen + (sulfur carrier)-H + 5'-deoxyadenosine + L-methionine + A + S-adenosyl-L-homocysteine + 2 H(+)</text>
        <dbReference type="Rhea" id="RHEA:37087"/>
        <dbReference type="Rhea" id="RHEA-COMP:10460"/>
        <dbReference type="Rhea" id="RHEA-COMP:10461"/>
        <dbReference type="Rhea" id="RHEA-COMP:14737"/>
        <dbReference type="Rhea" id="RHEA-COMP:14739"/>
        <dbReference type="ChEBI" id="CHEBI:13193"/>
        <dbReference type="ChEBI" id="CHEBI:15378"/>
        <dbReference type="ChEBI" id="CHEBI:17319"/>
        <dbReference type="ChEBI" id="CHEBI:17499"/>
        <dbReference type="ChEBI" id="CHEBI:29917"/>
        <dbReference type="ChEBI" id="CHEBI:29961"/>
        <dbReference type="ChEBI" id="CHEBI:57844"/>
        <dbReference type="ChEBI" id="CHEBI:57856"/>
        <dbReference type="ChEBI" id="CHEBI:59789"/>
        <dbReference type="ChEBI" id="CHEBI:64428"/>
        <dbReference type="ChEBI" id="CHEBI:73599"/>
        <dbReference type="EC" id="2.8.4.4"/>
    </reaction>
</comment>
<comment type="cofactor">
    <cofactor evidence="1">
        <name>[4Fe-4S] cluster</name>
        <dbReference type="ChEBI" id="CHEBI:49883"/>
    </cofactor>
    <text evidence="1">Binds 2 [4Fe-4S] clusters. One cluster is coordinated with 3 cysteines and an exchangeable S-adenosyl-L-methionine.</text>
</comment>
<comment type="subcellular location">
    <subcellularLocation>
        <location evidence="1">Cytoplasm</location>
    </subcellularLocation>
</comment>
<comment type="similarity">
    <text evidence="1">Belongs to the methylthiotransferase family. RimO subfamily.</text>
</comment>
<gene>
    <name evidence="1" type="primary">rimO</name>
    <name type="ordered locus">Tbd_1764</name>
</gene>
<sequence length="443" mass="48210">MVTKAKTARTPTVGFVSLGCPKATVDSERILTQLRAEGYGIVGSYDDADVVVVNTCGFIDAAVQESLEAIGEAIAENGKVIVTGCLGAKGELIREVHPKVLAVSGPHALDEVMEAVHGALPKPHDPFADLIPPGGIKLTPRHYAYLKISEGCNHRCSFCIIPSMRGDLVSRPIGEVMHEAEALVSAGVQELLVVSQDTSAYGVDVKYRPGFWGGRPVKTRMTELARALGSLGAWVRLHYVYPYPSVDDVIPLMADGVILPYLDIPFQHASPRILKLMKRPGAVEKTLDRIHAWRAAVPELTLRSTFIVGFPGETDPEFEELLDFLKHAQLDRVGCFKYSPIEGAVANELPDPVPEELKDERLERFMETQAEISAARLDAKIGRTIEVLVDEEDEVGTLARSHADAPEIDGVVYLEGVFGLKPGTRLTVKVDEADAHDLWATPV</sequence>
<accession>Q3SI16</accession>
<protein>
    <recommendedName>
        <fullName evidence="1">Ribosomal protein uS12 methylthiotransferase RimO</fullName>
        <shortName evidence="1">uS12 MTTase</shortName>
        <shortName evidence="1">uS12 methylthiotransferase</shortName>
        <ecNumber evidence="1">2.8.4.4</ecNumber>
    </recommendedName>
    <alternativeName>
        <fullName evidence="1">Ribosomal protein uS12 (aspartate-C(3))-methylthiotransferase</fullName>
    </alternativeName>
    <alternativeName>
        <fullName evidence="1">Ribosome maturation factor RimO</fullName>
    </alternativeName>
</protein>
<keyword id="KW-0004">4Fe-4S</keyword>
<keyword id="KW-0963">Cytoplasm</keyword>
<keyword id="KW-0408">Iron</keyword>
<keyword id="KW-0411">Iron-sulfur</keyword>
<keyword id="KW-0479">Metal-binding</keyword>
<keyword id="KW-1185">Reference proteome</keyword>
<keyword id="KW-0949">S-adenosyl-L-methionine</keyword>
<keyword id="KW-0808">Transferase</keyword>
<feature type="chain" id="PRO_0000375057" description="Ribosomal protein uS12 methylthiotransferase RimO">
    <location>
        <begin position="1"/>
        <end position="443"/>
    </location>
</feature>
<feature type="domain" description="MTTase N-terminal" evidence="1">
    <location>
        <begin position="11"/>
        <end position="121"/>
    </location>
</feature>
<feature type="domain" description="Radical SAM core" evidence="2">
    <location>
        <begin position="138"/>
        <end position="375"/>
    </location>
</feature>
<feature type="domain" description="TRAM" evidence="1">
    <location>
        <begin position="378"/>
        <end position="443"/>
    </location>
</feature>
<feature type="binding site" evidence="1">
    <location>
        <position position="20"/>
    </location>
    <ligand>
        <name>[4Fe-4S] cluster</name>
        <dbReference type="ChEBI" id="CHEBI:49883"/>
        <label>1</label>
    </ligand>
</feature>
<feature type="binding site" evidence="1">
    <location>
        <position position="56"/>
    </location>
    <ligand>
        <name>[4Fe-4S] cluster</name>
        <dbReference type="ChEBI" id="CHEBI:49883"/>
        <label>1</label>
    </ligand>
</feature>
<feature type="binding site" evidence="1">
    <location>
        <position position="85"/>
    </location>
    <ligand>
        <name>[4Fe-4S] cluster</name>
        <dbReference type="ChEBI" id="CHEBI:49883"/>
        <label>1</label>
    </ligand>
</feature>
<feature type="binding site" evidence="1">
    <location>
        <position position="152"/>
    </location>
    <ligand>
        <name>[4Fe-4S] cluster</name>
        <dbReference type="ChEBI" id="CHEBI:49883"/>
        <label>2</label>
        <note>4Fe-4S-S-AdoMet</note>
    </ligand>
</feature>
<feature type="binding site" evidence="1">
    <location>
        <position position="156"/>
    </location>
    <ligand>
        <name>[4Fe-4S] cluster</name>
        <dbReference type="ChEBI" id="CHEBI:49883"/>
        <label>2</label>
        <note>4Fe-4S-S-AdoMet</note>
    </ligand>
</feature>
<feature type="binding site" evidence="1">
    <location>
        <position position="159"/>
    </location>
    <ligand>
        <name>[4Fe-4S] cluster</name>
        <dbReference type="ChEBI" id="CHEBI:49883"/>
        <label>2</label>
        <note>4Fe-4S-S-AdoMet</note>
    </ligand>
</feature>